<proteinExistence type="inferred from homology"/>
<accession>Q81WC4</accession>
<accession>E9R322</accession>
<accession>E9R323</accession>
<accession>Q6HUG9</accession>
<accession>Q6KNQ5</accession>
<gene>
    <name evidence="1" type="primary">ftsL</name>
    <name type="ordered locus">BA_4056</name>
    <name type="ordered locus">GBAA_4056</name>
    <name type="ordered locus">BAS3768</name>
</gene>
<name>FTSL_BACAN</name>
<evidence type="ECO:0000255" key="1">
    <source>
        <dbReference type="HAMAP-Rule" id="MF_00910"/>
    </source>
</evidence>
<protein>
    <recommendedName>
        <fullName evidence="1">Cell division protein FtsL</fullName>
    </recommendedName>
</protein>
<sequence>MSNLAVKYKQQAQEEVQIQTPPQQMVQPKAKAKITRIEKLLYVAFIGFLLYACVAFIGNKAGLYQVNVEAATIEQKIVQQQKENQELQAEVEKLSRYERIAEVAKKHGLEINANNVKGLK</sequence>
<reference key="1">
    <citation type="journal article" date="2003" name="Nature">
        <title>The genome sequence of Bacillus anthracis Ames and comparison to closely related bacteria.</title>
        <authorList>
            <person name="Read T.D."/>
            <person name="Peterson S.N."/>
            <person name="Tourasse N.J."/>
            <person name="Baillie L.W."/>
            <person name="Paulsen I.T."/>
            <person name="Nelson K.E."/>
            <person name="Tettelin H."/>
            <person name="Fouts D.E."/>
            <person name="Eisen J.A."/>
            <person name="Gill S.R."/>
            <person name="Holtzapple E.K."/>
            <person name="Okstad O.A."/>
            <person name="Helgason E."/>
            <person name="Rilstone J."/>
            <person name="Wu M."/>
            <person name="Kolonay J.F."/>
            <person name="Beanan M.J."/>
            <person name="Dodson R.J."/>
            <person name="Brinkac L.M."/>
            <person name="Gwinn M.L."/>
            <person name="DeBoy R.T."/>
            <person name="Madpu R."/>
            <person name="Daugherty S.C."/>
            <person name="Durkin A.S."/>
            <person name="Haft D.H."/>
            <person name="Nelson W.C."/>
            <person name="Peterson J.D."/>
            <person name="Pop M."/>
            <person name="Khouri H.M."/>
            <person name="Radune D."/>
            <person name="Benton J.L."/>
            <person name="Mahamoud Y."/>
            <person name="Jiang L."/>
            <person name="Hance I.R."/>
            <person name="Weidman J.F."/>
            <person name="Berry K.J."/>
            <person name="Plaut R.D."/>
            <person name="Wolf A.M."/>
            <person name="Watkins K.L."/>
            <person name="Nierman W.C."/>
            <person name="Hazen A."/>
            <person name="Cline R.T."/>
            <person name="Redmond C."/>
            <person name="Thwaite J.E."/>
            <person name="White O."/>
            <person name="Salzberg S.L."/>
            <person name="Thomason B."/>
            <person name="Friedlander A.M."/>
            <person name="Koehler T.M."/>
            <person name="Hanna P.C."/>
            <person name="Kolstoe A.-B."/>
            <person name="Fraser C.M."/>
        </authorList>
    </citation>
    <scope>NUCLEOTIDE SEQUENCE [LARGE SCALE GENOMIC DNA]</scope>
    <source>
        <strain>Ames / isolate Porton</strain>
    </source>
</reference>
<reference key="2">
    <citation type="submission" date="2004-01" db="EMBL/GenBank/DDBJ databases">
        <title>Complete genome sequence of Bacillus anthracis Sterne.</title>
        <authorList>
            <person name="Brettin T.S."/>
            <person name="Bruce D."/>
            <person name="Challacombe J.F."/>
            <person name="Gilna P."/>
            <person name="Han C."/>
            <person name="Hill K."/>
            <person name="Hitchcock P."/>
            <person name="Jackson P."/>
            <person name="Keim P."/>
            <person name="Longmire J."/>
            <person name="Lucas S."/>
            <person name="Okinaka R."/>
            <person name="Richardson P."/>
            <person name="Rubin E."/>
            <person name="Tice H."/>
        </authorList>
    </citation>
    <scope>NUCLEOTIDE SEQUENCE [LARGE SCALE GENOMIC DNA]</scope>
    <source>
        <strain>Sterne</strain>
    </source>
</reference>
<reference key="3">
    <citation type="journal article" date="2009" name="J. Bacteriol.">
        <title>The complete genome sequence of Bacillus anthracis Ames 'Ancestor'.</title>
        <authorList>
            <person name="Ravel J."/>
            <person name="Jiang L."/>
            <person name="Stanley S.T."/>
            <person name="Wilson M.R."/>
            <person name="Decker R.S."/>
            <person name="Read T.D."/>
            <person name="Worsham P."/>
            <person name="Keim P.S."/>
            <person name="Salzberg S.L."/>
            <person name="Fraser-Liggett C.M."/>
            <person name="Rasko D.A."/>
        </authorList>
    </citation>
    <scope>NUCLEOTIDE SEQUENCE [LARGE SCALE GENOMIC DNA]</scope>
    <source>
        <strain>Ames ancestor</strain>
    </source>
</reference>
<keyword id="KW-0131">Cell cycle</keyword>
<keyword id="KW-0132">Cell division</keyword>
<keyword id="KW-1003">Cell membrane</keyword>
<keyword id="KW-0472">Membrane</keyword>
<keyword id="KW-1185">Reference proteome</keyword>
<keyword id="KW-0812">Transmembrane</keyword>
<keyword id="KW-1133">Transmembrane helix</keyword>
<organism>
    <name type="scientific">Bacillus anthracis</name>
    <dbReference type="NCBI Taxonomy" id="1392"/>
    <lineage>
        <taxon>Bacteria</taxon>
        <taxon>Bacillati</taxon>
        <taxon>Bacillota</taxon>
        <taxon>Bacilli</taxon>
        <taxon>Bacillales</taxon>
        <taxon>Bacillaceae</taxon>
        <taxon>Bacillus</taxon>
        <taxon>Bacillus cereus group</taxon>
    </lineage>
</organism>
<feature type="chain" id="PRO_0000414552" description="Cell division protein FtsL">
    <location>
        <begin position="1"/>
        <end position="120"/>
    </location>
</feature>
<feature type="topological domain" description="Cytoplasmic" evidence="1">
    <location>
        <begin position="1"/>
        <end position="36"/>
    </location>
</feature>
<feature type="transmembrane region" description="Helical" evidence="1">
    <location>
        <begin position="37"/>
        <end position="57"/>
    </location>
</feature>
<feature type="topological domain" description="Extracellular" evidence="1">
    <location>
        <begin position="58"/>
        <end position="120"/>
    </location>
</feature>
<comment type="function">
    <text evidence="1">Essential cell division protein.</text>
</comment>
<comment type="subcellular location">
    <subcellularLocation>
        <location evidence="1">Cell membrane</location>
        <topology evidence="1">Single-pass type II membrane protein</topology>
    </subcellularLocation>
    <text evidence="1">Localizes to the division septum where it forms a ring structure.</text>
</comment>
<comment type="similarity">
    <text evidence="1">Belongs to the FtsL family.</text>
</comment>
<dbReference type="EMBL" id="AE016879">
    <property type="protein sequence ID" value="AAP27782.1"/>
    <property type="molecule type" value="Genomic_DNA"/>
</dbReference>
<dbReference type="EMBL" id="AE017334">
    <property type="protein sequence ID" value="AAT33173.1"/>
    <property type="molecule type" value="Genomic_DNA"/>
</dbReference>
<dbReference type="EMBL" id="AE017225">
    <property type="protein sequence ID" value="AAT56070.1"/>
    <property type="molecule type" value="Genomic_DNA"/>
</dbReference>
<dbReference type="RefSeq" id="NP_846296.1">
    <property type="nucleotide sequence ID" value="NC_003997.3"/>
</dbReference>
<dbReference type="RefSeq" id="WP_000067081.1">
    <property type="nucleotide sequence ID" value="NZ_WXXJ01000026.1"/>
</dbReference>
<dbReference type="RefSeq" id="YP_030019.1">
    <property type="nucleotide sequence ID" value="NC_005945.1"/>
</dbReference>
<dbReference type="SMR" id="Q81WC4"/>
<dbReference type="IntAct" id="Q81WC4">
    <property type="interactions" value="1"/>
</dbReference>
<dbReference type="STRING" id="261594.GBAA_4056"/>
<dbReference type="DNASU" id="1086059"/>
<dbReference type="GeneID" id="92799810"/>
<dbReference type="KEGG" id="ban:BA_4056"/>
<dbReference type="KEGG" id="bar:GBAA_4056"/>
<dbReference type="KEGG" id="bat:BAS3768"/>
<dbReference type="PATRIC" id="fig|198094.11.peg.4027"/>
<dbReference type="eggNOG" id="COG4839">
    <property type="taxonomic scope" value="Bacteria"/>
</dbReference>
<dbReference type="HOGENOM" id="CLU_157825_2_0_9"/>
<dbReference type="OMA" id="MYAAVHI"/>
<dbReference type="OrthoDB" id="2916778at2"/>
<dbReference type="Proteomes" id="UP000000427">
    <property type="component" value="Chromosome"/>
</dbReference>
<dbReference type="Proteomes" id="UP000000594">
    <property type="component" value="Chromosome"/>
</dbReference>
<dbReference type="GO" id="GO:0032153">
    <property type="term" value="C:cell division site"/>
    <property type="evidence" value="ECO:0007669"/>
    <property type="project" value="UniProtKB-UniRule"/>
</dbReference>
<dbReference type="GO" id="GO:0005886">
    <property type="term" value="C:plasma membrane"/>
    <property type="evidence" value="ECO:0007669"/>
    <property type="project" value="UniProtKB-SubCell"/>
</dbReference>
<dbReference type="GO" id="GO:0043093">
    <property type="term" value="P:FtsZ-dependent cytokinesis"/>
    <property type="evidence" value="ECO:0007669"/>
    <property type="project" value="UniProtKB-UniRule"/>
</dbReference>
<dbReference type="HAMAP" id="MF_00910">
    <property type="entry name" value="FtsL"/>
    <property type="match status" value="1"/>
</dbReference>
<dbReference type="InterPro" id="IPR011922">
    <property type="entry name" value="Cell_div_FtsL"/>
</dbReference>
<dbReference type="InterPro" id="IPR007060">
    <property type="entry name" value="FtsL/DivIC"/>
</dbReference>
<dbReference type="NCBIfam" id="TIGR02209">
    <property type="entry name" value="ftsL_broad"/>
    <property type="match status" value="1"/>
</dbReference>
<dbReference type="Pfam" id="PF04977">
    <property type="entry name" value="DivIC"/>
    <property type="match status" value="1"/>
</dbReference>